<reference key="1">
    <citation type="submission" date="2008-05" db="EMBL/GenBank/DDBJ databases">
        <title>Genome sequence of Clostridium botulinum Ba4 strain 657.</title>
        <authorList>
            <person name="Shrivastava S."/>
            <person name="Brown J.L."/>
            <person name="Bruce D."/>
            <person name="Detter C."/>
            <person name="Munk C."/>
            <person name="Smith L.A."/>
            <person name="Smith T.J."/>
            <person name="Sutton G."/>
            <person name="Brettin T.S."/>
        </authorList>
    </citation>
    <scope>NUCLEOTIDE SEQUENCE [LARGE SCALE GENOMIC DNA]</scope>
    <source>
        <strain>657 / Type Ba4</strain>
    </source>
</reference>
<dbReference type="EMBL" id="CP001083">
    <property type="protein sequence ID" value="ACQ53701.1"/>
    <property type="molecule type" value="Genomic_DNA"/>
</dbReference>
<dbReference type="RefSeq" id="WP_003359974.1">
    <property type="nucleotide sequence ID" value="NC_012658.1"/>
</dbReference>
<dbReference type="SMR" id="C3L3F3"/>
<dbReference type="KEGG" id="cbi:CLJ_B3202"/>
<dbReference type="HOGENOM" id="CLU_038009_1_0_9"/>
<dbReference type="Proteomes" id="UP000002333">
    <property type="component" value="Chromosome"/>
</dbReference>
<dbReference type="GO" id="GO:0005829">
    <property type="term" value="C:cytosol"/>
    <property type="evidence" value="ECO:0007669"/>
    <property type="project" value="TreeGrafter"/>
</dbReference>
<dbReference type="GO" id="GO:0005886">
    <property type="term" value="C:plasma membrane"/>
    <property type="evidence" value="ECO:0007669"/>
    <property type="project" value="UniProtKB-SubCell"/>
</dbReference>
<dbReference type="GO" id="GO:0005525">
    <property type="term" value="F:GTP binding"/>
    <property type="evidence" value="ECO:0007669"/>
    <property type="project" value="UniProtKB-UniRule"/>
</dbReference>
<dbReference type="GO" id="GO:0003924">
    <property type="term" value="F:GTPase activity"/>
    <property type="evidence" value="ECO:0007669"/>
    <property type="project" value="UniProtKB-UniRule"/>
</dbReference>
<dbReference type="GO" id="GO:0043024">
    <property type="term" value="F:ribosomal small subunit binding"/>
    <property type="evidence" value="ECO:0007669"/>
    <property type="project" value="TreeGrafter"/>
</dbReference>
<dbReference type="GO" id="GO:0070181">
    <property type="term" value="F:small ribosomal subunit rRNA binding"/>
    <property type="evidence" value="ECO:0007669"/>
    <property type="project" value="UniProtKB-UniRule"/>
</dbReference>
<dbReference type="GO" id="GO:0000028">
    <property type="term" value="P:ribosomal small subunit assembly"/>
    <property type="evidence" value="ECO:0007669"/>
    <property type="project" value="TreeGrafter"/>
</dbReference>
<dbReference type="CDD" id="cd04163">
    <property type="entry name" value="Era"/>
    <property type="match status" value="1"/>
</dbReference>
<dbReference type="CDD" id="cd22534">
    <property type="entry name" value="KH-II_Era"/>
    <property type="match status" value="1"/>
</dbReference>
<dbReference type="FunFam" id="3.30.300.20:FF:000003">
    <property type="entry name" value="GTPase Era"/>
    <property type="match status" value="1"/>
</dbReference>
<dbReference type="FunFam" id="3.40.50.300:FF:000094">
    <property type="entry name" value="GTPase Era"/>
    <property type="match status" value="1"/>
</dbReference>
<dbReference type="Gene3D" id="3.30.300.20">
    <property type="match status" value="1"/>
</dbReference>
<dbReference type="Gene3D" id="3.40.50.300">
    <property type="entry name" value="P-loop containing nucleotide triphosphate hydrolases"/>
    <property type="match status" value="1"/>
</dbReference>
<dbReference type="HAMAP" id="MF_00367">
    <property type="entry name" value="GTPase_Era"/>
    <property type="match status" value="1"/>
</dbReference>
<dbReference type="InterPro" id="IPR030388">
    <property type="entry name" value="G_ERA_dom"/>
</dbReference>
<dbReference type="InterPro" id="IPR006073">
    <property type="entry name" value="GTP-bd"/>
</dbReference>
<dbReference type="InterPro" id="IPR005662">
    <property type="entry name" value="GTPase_Era-like"/>
</dbReference>
<dbReference type="InterPro" id="IPR015946">
    <property type="entry name" value="KH_dom-like_a/b"/>
</dbReference>
<dbReference type="InterPro" id="IPR004044">
    <property type="entry name" value="KH_dom_type_2"/>
</dbReference>
<dbReference type="InterPro" id="IPR009019">
    <property type="entry name" value="KH_sf_prok-type"/>
</dbReference>
<dbReference type="InterPro" id="IPR027417">
    <property type="entry name" value="P-loop_NTPase"/>
</dbReference>
<dbReference type="InterPro" id="IPR005225">
    <property type="entry name" value="Small_GTP-bd"/>
</dbReference>
<dbReference type="NCBIfam" id="TIGR00436">
    <property type="entry name" value="era"/>
    <property type="match status" value="1"/>
</dbReference>
<dbReference type="NCBIfam" id="NF000908">
    <property type="entry name" value="PRK00089.1"/>
    <property type="match status" value="1"/>
</dbReference>
<dbReference type="NCBIfam" id="TIGR00231">
    <property type="entry name" value="small_GTP"/>
    <property type="match status" value="1"/>
</dbReference>
<dbReference type="PANTHER" id="PTHR42698">
    <property type="entry name" value="GTPASE ERA"/>
    <property type="match status" value="1"/>
</dbReference>
<dbReference type="PANTHER" id="PTHR42698:SF1">
    <property type="entry name" value="GTPASE ERA, MITOCHONDRIAL"/>
    <property type="match status" value="1"/>
</dbReference>
<dbReference type="Pfam" id="PF07650">
    <property type="entry name" value="KH_2"/>
    <property type="match status" value="1"/>
</dbReference>
<dbReference type="Pfam" id="PF01926">
    <property type="entry name" value="MMR_HSR1"/>
    <property type="match status" value="1"/>
</dbReference>
<dbReference type="SUPFAM" id="SSF52540">
    <property type="entry name" value="P-loop containing nucleoside triphosphate hydrolases"/>
    <property type="match status" value="1"/>
</dbReference>
<dbReference type="SUPFAM" id="SSF54814">
    <property type="entry name" value="Prokaryotic type KH domain (KH-domain type II)"/>
    <property type="match status" value="1"/>
</dbReference>
<dbReference type="PROSITE" id="PS51713">
    <property type="entry name" value="G_ERA"/>
    <property type="match status" value="1"/>
</dbReference>
<dbReference type="PROSITE" id="PS50823">
    <property type="entry name" value="KH_TYPE_2"/>
    <property type="match status" value="1"/>
</dbReference>
<accession>C3L3F3</accession>
<keyword id="KW-1003">Cell membrane</keyword>
<keyword id="KW-0963">Cytoplasm</keyword>
<keyword id="KW-0342">GTP-binding</keyword>
<keyword id="KW-0472">Membrane</keyword>
<keyword id="KW-0547">Nucleotide-binding</keyword>
<keyword id="KW-0690">Ribosome biogenesis</keyword>
<keyword id="KW-0694">RNA-binding</keyword>
<keyword id="KW-0699">rRNA-binding</keyword>
<sequence>MFKSGFVTIVGRPNVGKSTLLNAIMKEKLSIVSCRPQTTRNNIQTILTEDNYQLVFVDTPGIHKPKHKLGEYMVKSASDAMKDVDLVLFLINPDEKPGRGDLFIIEQLKEVKVPVFLVLNKIDENPQEKVAETLKTYSELMEFEEIIPISALKGKNIDLLKELMFKYIPEGPQYYPEDMIIDQNERFIVAEIVREKALRLLSEEVPHGIAVEILQMKKNEKGTYHIEGNILCEKNSHKPIIIGKGGSKLKKISQYARQDIEAFLQSKVYIRLWVKVKEEWRDNQSLLKELGYKNMK</sequence>
<feature type="chain" id="PRO_1000205537" description="GTPase Era">
    <location>
        <begin position="1"/>
        <end position="296"/>
    </location>
</feature>
<feature type="domain" description="Era-type G" evidence="2">
    <location>
        <begin position="3"/>
        <end position="170"/>
    </location>
</feature>
<feature type="domain" description="KH type-2" evidence="1">
    <location>
        <begin position="201"/>
        <end position="278"/>
    </location>
</feature>
<feature type="region of interest" description="G1" evidence="2">
    <location>
        <begin position="11"/>
        <end position="18"/>
    </location>
</feature>
<feature type="region of interest" description="G2" evidence="2">
    <location>
        <begin position="37"/>
        <end position="41"/>
    </location>
</feature>
<feature type="region of interest" description="G3" evidence="2">
    <location>
        <begin position="58"/>
        <end position="61"/>
    </location>
</feature>
<feature type="region of interest" description="G4" evidence="2">
    <location>
        <begin position="120"/>
        <end position="123"/>
    </location>
</feature>
<feature type="region of interest" description="G5" evidence="2">
    <location>
        <begin position="149"/>
        <end position="151"/>
    </location>
</feature>
<feature type="binding site" evidence="1">
    <location>
        <begin position="11"/>
        <end position="18"/>
    </location>
    <ligand>
        <name>GTP</name>
        <dbReference type="ChEBI" id="CHEBI:37565"/>
    </ligand>
</feature>
<feature type="binding site" evidence="1">
    <location>
        <begin position="58"/>
        <end position="62"/>
    </location>
    <ligand>
        <name>GTP</name>
        <dbReference type="ChEBI" id="CHEBI:37565"/>
    </ligand>
</feature>
<feature type="binding site" evidence="1">
    <location>
        <begin position="120"/>
        <end position="123"/>
    </location>
    <ligand>
        <name>GTP</name>
        <dbReference type="ChEBI" id="CHEBI:37565"/>
    </ligand>
</feature>
<gene>
    <name evidence="1" type="primary">era</name>
    <name type="ordered locus">CLJ_B3202</name>
</gene>
<proteinExistence type="inferred from homology"/>
<protein>
    <recommendedName>
        <fullName evidence="1">GTPase Era</fullName>
    </recommendedName>
</protein>
<name>ERA_CLOB6</name>
<evidence type="ECO:0000255" key="1">
    <source>
        <dbReference type="HAMAP-Rule" id="MF_00367"/>
    </source>
</evidence>
<evidence type="ECO:0000255" key="2">
    <source>
        <dbReference type="PROSITE-ProRule" id="PRU01050"/>
    </source>
</evidence>
<organism>
    <name type="scientific">Clostridium botulinum (strain 657 / Type Ba4)</name>
    <dbReference type="NCBI Taxonomy" id="515621"/>
    <lineage>
        <taxon>Bacteria</taxon>
        <taxon>Bacillati</taxon>
        <taxon>Bacillota</taxon>
        <taxon>Clostridia</taxon>
        <taxon>Eubacteriales</taxon>
        <taxon>Clostridiaceae</taxon>
        <taxon>Clostridium</taxon>
    </lineage>
</organism>
<comment type="function">
    <text evidence="1">An essential GTPase that binds both GDP and GTP, with rapid nucleotide exchange. Plays a role in 16S rRNA processing and 30S ribosomal subunit biogenesis and possibly also in cell cycle regulation and energy metabolism.</text>
</comment>
<comment type="subunit">
    <text evidence="1">Monomer.</text>
</comment>
<comment type="subcellular location">
    <subcellularLocation>
        <location>Cytoplasm</location>
    </subcellularLocation>
    <subcellularLocation>
        <location evidence="1">Cell membrane</location>
        <topology evidence="1">Peripheral membrane protein</topology>
    </subcellularLocation>
</comment>
<comment type="similarity">
    <text evidence="1 2">Belongs to the TRAFAC class TrmE-Era-EngA-EngB-Septin-like GTPase superfamily. Era GTPase family.</text>
</comment>